<protein>
    <recommendedName>
        <fullName evidence="1">Chaperone protein HscA</fullName>
    </recommendedName>
    <alternativeName>
        <fullName evidence="1">Hsc66</fullName>
    </alternativeName>
</protein>
<evidence type="ECO:0000255" key="1">
    <source>
        <dbReference type="HAMAP-Rule" id="MF_00679"/>
    </source>
</evidence>
<keyword id="KW-0067">ATP-binding</keyword>
<keyword id="KW-0143">Chaperone</keyword>
<keyword id="KW-0547">Nucleotide-binding</keyword>
<keyword id="KW-0346">Stress response</keyword>
<feature type="chain" id="PRO_1000147712" description="Chaperone protein HscA">
    <location>
        <begin position="1"/>
        <end position="611"/>
    </location>
</feature>
<accession>B8D8B9</accession>
<name>HSCA_BUCAT</name>
<sequence>MIFFKKKHDKKLLLGIDLGTTYSLAATVREKSVILLLDKKKRYLLPSVVHYKKNKISVGWKALENITEDPTNTISSVKRLLGRSINFVKKKFPILPYLIEKDIHEGIFFRTNFGNITPIDVSSHILKKLKKRAVLLFNQEIDASVITVPAYFNDFQKKETKKAAVLSGINLIRLLNEPTAAAVAYGLQKLKKGIVLVYDLGGGTFDVSILNLNKGIFEVLATSGDSNLGGDDFDDALAKNIYKKSNLQNRCNDFFQTSLLQIAKSTKLKLTKYEKVEVHFFDWKGYITREEFNLIIIDFIKKTLFICSDLLEEINLSVEQIKEVIMVGGSTRIPLVHTEVSKFFKKDLLKSINPDQVVAIGAAMHVDMLFSSKNNTKNKVILLDVMPLSLGIEVMGGFVEKIIFRNTSLPISKTKEFTTYKDNQTSILIHIVQGERELVKDCISLSRFVLRDIKPQKAGLVRILVTFQVDTDGLIHVKILENYSSKEKKIIIDNNITLKNLNISQILKDSLKHSKDDYYFRVKEEKKIECVRTLEILNKSLKKHLKLISKKELKKIKYTQEKLQKSIQEDDYFSMKNNLQKLDEVSKNFFSLQLKNAIDCSSIKNILKENI</sequence>
<proteinExistence type="inferred from homology"/>
<dbReference type="EMBL" id="CP001158">
    <property type="protein sequence ID" value="ACL30384.1"/>
    <property type="molecule type" value="Genomic_DNA"/>
</dbReference>
<dbReference type="RefSeq" id="WP_009874552.1">
    <property type="nucleotide sequence ID" value="NC_011834.1"/>
</dbReference>
<dbReference type="SMR" id="B8D8B9"/>
<dbReference type="KEGG" id="bau:BUAPTUC7_598"/>
<dbReference type="HOGENOM" id="CLU_005965_2_4_6"/>
<dbReference type="GO" id="GO:0005524">
    <property type="term" value="F:ATP binding"/>
    <property type="evidence" value="ECO:0007669"/>
    <property type="project" value="UniProtKB-KW"/>
</dbReference>
<dbReference type="GO" id="GO:0016887">
    <property type="term" value="F:ATP hydrolysis activity"/>
    <property type="evidence" value="ECO:0007669"/>
    <property type="project" value="UniProtKB-UniRule"/>
</dbReference>
<dbReference type="GO" id="GO:0140662">
    <property type="term" value="F:ATP-dependent protein folding chaperone"/>
    <property type="evidence" value="ECO:0007669"/>
    <property type="project" value="InterPro"/>
</dbReference>
<dbReference type="GO" id="GO:0051082">
    <property type="term" value="F:unfolded protein binding"/>
    <property type="evidence" value="ECO:0007669"/>
    <property type="project" value="InterPro"/>
</dbReference>
<dbReference type="GO" id="GO:0016226">
    <property type="term" value="P:iron-sulfur cluster assembly"/>
    <property type="evidence" value="ECO:0007669"/>
    <property type="project" value="InterPro"/>
</dbReference>
<dbReference type="CDD" id="cd10236">
    <property type="entry name" value="ASKHA_NBD_HSP70_HscA"/>
    <property type="match status" value="1"/>
</dbReference>
<dbReference type="Gene3D" id="1.20.1270.10">
    <property type="match status" value="1"/>
</dbReference>
<dbReference type="Gene3D" id="3.30.30.30">
    <property type="match status" value="1"/>
</dbReference>
<dbReference type="Gene3D" id="3.30.420.40">
    <property type="match status" value="2"/>
</dbReference>
<dbReference type="Gene3D" id="3.90.640.10">
    <property type="entry name" value="Actin, Chain A, domain 4"/>
    <property type="match status" value="1"/>
</dbReference>
<dbReference type="Gene3D" id="2.60.34.10">
    <property type="entry name" value="Substrate Binding Domain Of DNAk, Chain A, domain 1"/>
    <property type="match status" value="1"/>
</dbReference>
<dbReference type="HAMAP" id="MF_00679">
    <property type="entry name" value="HscA"/>
    <property type="match status" value="1"/>
</dbReference>
<dbReference type="InterPro" id="IPR043129">
    <property type="entry name" value="ATPase_NBD"/>
</dbReference>
<dbReference type="InterPro" id="IPR018181">
    <property type="entry name" value="Heat_shock_70_CS"/>
</dbReference>
<dbReference type="InterPro" id="IPR042039">
    <property type="entry name" value="HscA_NBD"/>
</dbReference>
<dbReference type="InterPro" id="IPR029048">
    <property type="entry name" value="HSP70_C_sf"/>
</dbReference>
<dbReference type="InterPro" id="IPR029047">
    <property type="entry name" value="HSP70_peptide-bd_sf"/>
</dbReference>
<dbReference type="InterPro" id="IPR013126">
    <property type="entry name" value="Hsp_70_fam"/>
</dbReference>
<dbReference type="InterPro" id="IPR010236">
    <property type="entry name" value="ISC_FeS_clus_asmbl_HscA"/>
</dbReference>
<dbReference type="NCBIfam" id="TIGR01991">
    <property type="entry name" value="HscA"/>
    <property type="match status" value="1"/>
</dbReference>
<dbReference type="NCBIfam" id="NF003520">
    <property type="entry name" value="PRK05183.1"/>
    <property type="match status" value="1"/>
</dbReference>
<dbReference type="PANTHER" id="PTHR19375">
    <property type="entry name" value="HEAT SHOCK PROTEIN 70KDA"/>
    <property type="match status" value="1"/>
</dbReference>
<dbReference type="Pfam" id="PF00012">
    <property type="entry name" value="HSP70"/>
    <property type="match status" value="1"/>
</dbReference>
<dbReference type="PRINTS" id="PR00301">
    <property type="entry name" value="HEATSHOCK70"/>
</dbReference>
<dbReference type="SUPFAM" id="SSF53067">
    <property type="entry name" value="Actin-like ATPase domain"/>
    <property type="match status" value="2"/>
</dbReference>
<dbReference type="SUPFAM" id="SSF100934">
    <property type="entry name" value="Heat shock protein 70kD (HSP70), C-terminal subdomain"/>
    <property type="match status" value="1"/>
</dbReference>
<dbReference type="SUPFAM" id="SSF100920">
    <property type="entry name" value="Heat shock protein 70kD (HSP70), peptide-binding domain"/>
    <property type="match status" value="1"/>
</dbReference>
<dbReference type="PROSITE" id="PS00297">
    <property type="entry name" value="HSP70_1"/>
    <property type="match status" value="1"/>
</dbReference>
<dbReference type="PROSITE" id="PS00329">
    <property type="entry name" value="HSP70_2"/>
    <property type="match status" value="1"/>
</dbReference>
<dbReference type="PROSITE" id="PS01036">
    <property type="entry name" value="HSP70_3"/>
    <property type="match status" value="1"/>
</dbReference>
<gene>
    <name evidence="1" type="primary">hscA</name>
    <name type="ordered locus">BUAPTUC7_598</name>
</gene>
<organism>
    <name type="scientific">Buchnera aphidicola subsp. Acyrthosiphon pisum (strain Tuc7)</name>
    <dbReference type="NCBI Taxonomy" id="561501"/>
    <lineage>
        <taxon>Bacteria</taxon>
        <taxon>Pseudomonadati</taxon>
        <taxon>Pseudomonadota</taxon>
        <taxon>Gammaproteobacteria</taxon>
        <taxon>Enterobacterales</taxon>
        <taxon>Erwiniaceae</taxon>
        <taxon>Buchnera</taxon>
    </lineage>
</organism>
<reference key="1">
    <citation type="journal article" date="2009" name="Science">
        <title>The dynamics and time scale of ongoing genomic erosion in symbiotic bacteria.</title>
        <authorList>
            <person name="Moran N.A."/>
            <person name="McLaughlin H.J."/>
            <person name="Sorek R."/>
        </authorList>
    </citation>
    <scope>NUCLEOTIDE SEQUENCE [LARGE SCALE GENOMIC DNA]</scope>
    <source>
        <strain>Tuc7</strain>
    </source>
</reference>
<comment type="function">
    <text evidence="1">Chaperone involved in the maturation of iron-sulfur cluster-containing proteins. Has a low intrinsic ATPase activity which is markedly stimulated by HscB. Involved in the maturation of IscU.</text>
</comment>
<comment type="similarity">
    <text evidence="1">Belongs to the heat shock protein 70 family.</text>
</comment>